<dbReference type="EMBL" id="CP001392">
    <property type="protein sequence ID" value="ACM31573.1"/>
    <property type="molecule type" value="Genomic_DNA"/>
</dbReference>
<dbReference type="RefSeq" id="WP_011803537.1">
    <property type="nucleotide sequence ID" value="NC_011992.1"/>
</dbReference>
<dbReference type="SMR" id="B9MA02"/>
<dbReference type="GeneID" id="84683404"/>
<dbReference type="KEGG" id="dia:Dtpsy_0086"/>
<dbReference type="eggNOG" id="COG0851">
    <property type="taxonomic scope" value="Bacteria"/>
</dbReference>
<dbReference type="HOGENOM" id="CLU_137929_2_1_4"/>
<dbReference type="Proteomes" id="UP000000450">
    <property type="component" value="Chromosome"/>
</dbReference>
<dbReference type="GO" id="GO:0051301">
    <property type="term" value="P:cell division"/>
    <property type="evidence" value="ECO:0007669"/>
    <property type="project" value="UniProtKB-KW"/>
</dbReference>
<dbReference type="GO" id="GO:0032955">
    <property type="term" value="P:regulation of division septum assembly"/>
    <property type="evidence" value="ECO:0007669"/>
    <property type="project" value="InterPro"/>
</dbReference>
<dbReference type="FunFam" id="3.30.1070.10:FF:000001">
    <property type="entry name" value="Cell division topological specificity factor"/>
    <property type="match status" value="1"/>
</dbReference>
<dbReference type="Gene3D" id="3.30.1070.10">
    <property type="entry name" value="Cell division topological specificity factor MinE"/>
    <property type="match status" value="1"/>
</dbReference>
<dbReference type="HAMAP" id="MF_00262">
    <property type="entry name" value="MinE"/>
    <property type="match status" value="1"/>
</dbReference>
<dbReference type="InterPro" id="IPR005527">
    <property type="entry name" value="MinE"/>
</dbReference>
<dbReference type="InterPro" id="IPR036707">
    <property type="entry name" value="MinE_sf"/>
</dbReference>
<dbReference type="NCBIfam" id="TIGR01215">
    <property type="entry name" value="minE"/>
    <property type="match status" value="1"/>
</dbReference>
<dbReference type="NCBIfam" id="NF001422">
    <property type="entry name" value="PRK00296.1"/>
    <property type="match status" value="1"/>
</dbReference>
<dbReference type="NCBIfam" id="NF010595">
    <property type="entry name" value="PRK13989.1"/>
    <property type="match status" value="1"/>
</dbReference>
<dbReference type="Pfam" id="PF03776">
    <property type="entry name" value="MinE"/>
    <property type="match status" value="1"/>
</dbReference>
<dbReference type="SUPFAM" id="SSF55229">
    <property type="entry name" value="Cell division protein MinE topological specificity domain"/>
    <property type="match status" value="1"/>
</dbReference>
<evidence type="ECO:0000255" key="1">
    <source>
        <dbReference type="HAMAP-Rule" id="MF_00262"/>
    </source>
</evidence>
<keyword id="KW-0131">Cell cycle</keyword>
<keyword id="KW-0132">Cell division</keyword>
<keyword id="KW-1185">Reference proteome</keyword>
<sequence length="88" mass="9901">MSLLSFLLGEKKKTASVAKERLQIILAHERSGRSAGQPDYLPALQRELVAVISKYVKINADDLKVHFERQDDLEVLEVKIELPEATAK</sequence>
<proteinExistence type="inferred from homology"/>
<protein>
    <recommendedName>
        <fullName evidence="1">Cell division topological specificity factor</fullName>
    </recommendedName>
</protein>
<accession>B9MA02</accession>
<name>MINE_ACIET</name>
<feature type="chain" id="PRO_1000191276" description="Cell division topological specificity factor">
    <location>
        <begin position="1"/>
        <end position="88"/>
    </location>
</feature>
<gene>
    <name evidence="1" type="primary">minE</name>
    <name type="ordered locus">Dtpsy_0086</name>
</gene>
<organism>
    <name type="scientific">Acidovorax ebreus (strain TPSY)</name>
    <name type="common">Diaphorobacter sp. (strain TPSY)</name>
    <dbReference type="NCBI Taxonomy" id="535289"/>
    <lineage>
        <taxon>Bacteria</taxon>
        <taxon>Pseudomonadati</taxon>
        <taxon>Pseudomonadota</taxon>
        <taxon>Betaproteobacteria</taxon>
        <taxon>Burkholderiales</taxon>
        <taxon>Comamonadaceae</taxon>
        <taxon>Diaphorobacter</taxon>
    </lineage>
</organism>
<reference key="1">
    <citation type="submission" date="2009-01" db="EMBL/GenBank/DDBJ databases">
        <title>Complete sequence of Diaphorobacter sp. TPSY.</title>
        <authorList>
            <consortium name="US DOE Joint Genome Institute"/>
            <person name="Lucas S."/>
            <person name="Copeland A."/>
            <person name="Lapidus A."/>
            <person name="Glavina del Rio T."/>
            <person name="Tice H."/>
            <person name="Bruce D."/>
            <person name="Goodwin L."/>
            <person name="Pitluck S."/>
            <person name="Chertkov O."/>
            <person name="Brettin T."/>
            <person name="Detter J.C."/>
            <person name="Han C."/>
            <person name="Larimer F."/>
            <person name="Land M."/>
            <person name="Hauser L."/>
            <person name="Kyrpides N."/>
            <person name="Mikhailova N."/>
            <person name="Coates J.D."/>
        </authorList>
    </citation>
    <scope>NUCLEOTIDE SEQUENCE [LARGE SCALE GENOMIC DNA]</scope>
    <source>
        <strain>TPSY</strain>
    </source>
</reference>
<comment type="function">
    <text evidence="1">Prevents the cell division inhibition by proteins MinC and MinD at internal division sites while permitting inhibition at polar sites. This ensures cell division at the proper site by restricting the formation of a division septum at the midpoint of the long axis of the cell.</text>
</comment>
<comment type="similarity">
    <text evidence="1">Belongs to the MinE family.</text>
</comment>